<sequence length="346" mass="39746">MKLSSEKLPKNPFSLSQYAAKQQKFFQWKKEKPDYYLHANLVDTALQFLKERIRRGDAMAYFLRGQLYFEEGWYEEALAQFEEIQEKDHQAIYQLGVMYYDGLGTIANAEKGVNYMRKILDSSCPQTMHLKFAAAYNLGRAYFEGKGVKRSDEEAERLWLLAADNGNPKASVKAQSILGLFYSMKEPKELEKAFFWHSEACGNGSLESQGALGLMYFYGQGIRQDTDAALHCLREAAERGNVYAQGTLVEYYYKMKFFTKCVSFSKRIADYDEVHDIPMIAHVTDCLPEFIIKGMAMAAFYHGRCLQLGLGIMKDEESAKHYYSKACRLNPTLADELHSLLIHQRI</sequence>
<reference key="1">
    <citation type="journal article" date="2005" name="Science">
        <title>The transcriptional landscape of the mammalian genome.</title>
        <authorList>
            <person name="Carninci P."/>
            <person name="Kasukawa T."/>
            <person name="Katayama S."/>
            <person name="Gough J."/>
            <person name="Frith M.C."/>
            <person name="Maeda N."/>
            <person name="Oyama R."/>
            <person name="Ravasi T."/>
            <person name="Lenhard B."/>
            <person name="Wells C."/>
            <person name="Kodzius R."/>
            <person name="Shimokawa K."/>
            <person name="Bajic V.B."/>
            <person name="Brenner S.E."/>
            <person name="Batalov S."/>
            <person name="Forrest A.R."/>
            <person name="Zavolan M."/>
            <person name="Davis M.J."/>
            <person name="Wilming L.G."/>
            <person name="Aidinis V."/>
            <person name="Allen J.E."/>
            <person name="Ambesi-Impiombato A."/>
            <person name="Apweiler R."/>
            <person name="Aturaliya R.N."/>
            <person name="Bailey T.L."/>
            <person name="Bansal M."/>
            <person name="Baxter L."/>
            <person name="Beisel K.W."/>
            <person name="Bersano T."/>
            <person name="Bono H."/>
            <person name="Chalk A.M."/>
            <person name="Chiu K.P."/>
            <person name="Choudhary V."/>
            <person name="Christoffels A."/>
            <person name="Clutterbuck D.R."/>
            <person name="Crowe M.L."/>
            <person name="Dalla E."/>
            <person name="Dalrymple B.P."/>
            <person name="de Bono B."/>
            <person name="Della Gatta G."/>
            <person name="di Bernardo D."/>
            <person name="Down T."/>
            <person name="Engstrom P."/>
            <person name="Fagiolini M."/>
            <person name="Faulkner G."/>
            <person name="Fletcher C.F."/>
            <person name="Fukushima T."/>
            <person name="Furuno M."/>
            <person name="Futaki S."/>
            <person name="Gariboldi M."/>
            <person name="Georgii-Hemming P."/>
            <person name="Gingeras T.R."/>
            <person name="Gojobori T."/>
            <person name="Green R.E."/>
            <person name="Gustincich S."/>
            <person name="Harbers M."/>
            <person name="Hayashi Y."/>
            <person name="Hensch T.K."/>
            <person name="Hirokawa N."/>
            <person name="Hill D."/>
            <person name="Huminiecki L."/>
            <person name="Iacono M."/>
            <person name="Ikeo K."/>
            <person name="Iwama A."/>
            <person name="Ishikawa T."/>
            <person name="Jakt M."/>
            <person name="Kanapin A."/>
            <person name="Katoh M."/>
            <person name="Kawasawa Y."/>
            <person name="Kelso J."/>
            <person name="Kitamura H."/>
            <person name="Kitano H."/>
            <person name="Kollias G."/>
            <person name="Krishnan S.P."/>
            <person name="Kruger A."/>
            <person name="Kummerfeld S.K."/>
            <person name="Kurochkin I.V."/>
            <person name="Lareau L.F."/>
            <person name="Lazarevic D."/>
            <person name="Lipovich L."/>
            <person name="Liu J."/>
            <person name="Liuni S."/>
            <person name="McWilliam S."/>
            <person name="Madan Babu M."/>
            <person name="Madera M."/>
            <person name="Marchionni L."/>
            <person name="Matsuda H."/>
            <person name="Matsuzawa S."/>
            <person name="Miki H."/>
            <person name="Mignone F."/>
            <person name="Miyake S."/>
            <person name="Morris K."/>
            <person name="Mottagui-Tabar S."/>
            <person name="Mulder N."/>
            <person name="Nakano N."/>
            <person name="Nakauchi H."/>
            <person name="Ng P."/>
            <person name="Nilsson R."/>
            <person name="Nishiguchi S."/>
            <person name="Nishikawa S."/>
            <person name="Nori F."/>
            <person name="Ohara O."/>
            <person name="Okazaki Y."/>
            <person name="Orlando V."/>
            <person name="Pang K.C."/>
            <person name="Pavan W.J."/>
            <person name="Pavesi G."/>
            <person name="Pesole G."/>
            <person name="Petrovsky N."/>
            <person name="Piazza S."/>
            <person name="Reed J."/>
            <person name="Reid J.F."/>
            <person name="Ring B.Z."/>
            <person name="Ringwald M."/>
            <person name="Rost B."/>
            <person name="Ruan Y."/>
            <person name="Salzberg S.L."/>
            <person name="Sandelin A."/>
            <person name="Schneider C."/>
            <person name="Schoenbach C."/>
            <person name="Sekiguchi K."/>
            <person name="Semple C.A."/>
            <person name="Seno S."/>
            <person name="Sessa L."/>
            <person name="Sheng Y."/>
            <person name="Shibata Y."/>
            <person name="Shimada H."/>
            <person name="Shimada K."/>
            <person name="Silva D."/>
            <person name="Sinclair B."/>
            <person name="Sperling S."/>
            <person name="Stupka E."/>
            <person name="Sugiura K."/>
            <person name="Sultana R."/>
            <person name="Takenaka Y."/>
            <person name="Taki K."/>
            <person name="Tammoja K."/>
            <person name="Tan S.L."/>
            <person name="Tang S."/>
            <person name="Taylor M.S."/>
            <person name="Tegner J."/>
            <person name="Teichmann S.A."/>
            <person name="Ueda H.R."/>
            <person name="van Nimwegen E."/>
            <person name="Verardo R."/>
            <person name="Wei C.L."/>
            <person name="Yagi K."/>
            <person name="Yamanishi H."/>
            <person name="Zabarovsky E."/>
            <person name="Zhu S."/>
            <person name="Zimmer A."/>
            <person name="Hide W."/>
            <person name="Bult C."/>
            <person name="Grimmond S.M."/>
            <person name="Teasdale R.D."/>
            <person name="Liu E.T."/>
            <person name="Brusic V."/>
            <person name="Quackenbush J."/>
            <person name="Wahlestedt C."/>
            <person name="Mattick J.S."/>
            <person name="Hume D.A."/>
            <person name="Kai C."/>
            <person name="Sasaki D."/>
            <person name="Tomaru Y."/>
            <person name="Fukuda S."/>
            <person name="Kanamori-Katayama M."/>
            <person name="Suzuki M."/>
            <person name="Aoki J."/>
            <person name="Arakawa T."/>
            <person name="Iida J."/>
            <person name="Imamura K."/>
            <person name="Itoh M."/>
            <person name="Kato T."/>
            <person name="Kawaji H."/>
            <person name="Kawagashira N."/>
            <person name="Kawashima T."/>
            <person name="Kojima M."/>
            <person name="Kondo S."/>
            <person name="Konno H."/>
            <person name="Nakano K."/>
            <person name="Ninomiya N."/>
            <person name="Nishio T."/>
            <person name="Okada M."/>
            <person name="Plessy C."/>
            <person name="Shibata K."/>
            <person name="Shiraki T."/>
            <person name="Suzuki S."/>
            <person name="Tagami M."/>
            <person name="Waki K."/>
            <person name="Watahiki A."/>
            <person name="Okamura-Oho Y."/>
            <person name="Suzuki H."/>
            <person name="Kawai J."/>
            <person name="Hayashizaki Y."/>
        </authorList>
    </citation>
    <scope>NUCLEOTIDE SEQUENCE [LARGE SCALE MRNA] (ISOFORMS 1 AND 2)</scope>
    <source>
        <strain>C57BL/6J</strain>
        <tissue>Bone</tissue>
        <tissue>Testis</tissue>
    </source>
</reference>
<reference key="2">
    <citation type="journal article" date="2004" name="Genome Res.">
        <title>The status, quality, and expansion of the NIH full-length cDNA project: the Mammalian Gene Collection (MGC).</title>
        <authorList>
            <consortium name="The MGC Project Team"/>
        </authorList>
    </citation>
    <scope>NUCLEOTIDE SEQUENCE [LARGE SCALE MRNA] (ISOFORM 1)</scope>
    <source>
        <tissue>Eye</tissue>
        <tissue>Testis</tissue>
    </source>
</reference>
<name>LR2BP_MOUSE</name>
<feature type="chain" id="PRO_0000315709" description="LRP2-binding protein">
    <location>
        <begin position="1"/>
        <end position="346"/>
    </location>
</feature>
<feature type="repeat" description="TPR">
    <location>
        <begin position="58"/>
        <end position="91"/>
    </location>
</feature>
<feature type="repeat" description="Sel1-like 1">
    <location>
        <begin position="92"/>
        <end position="124"/>
    </location>
</feature>
<feature type="repeat" description="Sel1-like 2">
    <location>
        <begin position="132"/>
        <end position="167"/>
    </location>
</feature>
<feature type="repeat" description="Sel1-like 3">
    <location>
        <begin position="172"/>
        <end position="205"/>
    </location>
</feature>
<feature type="repeat" description="Sel1-like 4">
    <location>
        <begin position="206"/>
        <end position="241"/>
    </location>
</feature>
<feature type="repeat" description="Sel1-like 5">
    <location>
        <begin position="242"/>
        <end position="276"/>
    </location>
</feature>
<feature type="repeat" description="Sel1-like 6">
    <location>
        <begin position="296"/>
        <end position="331"/>
    </location>
</feature>
<feature type="splice variant" id="VSP_030665" description="In isoform 2." evidence="2">
    <location>
        <begin position="1"/>
        <end position="214"/>
    </location>
</feature>
<feature type="sequence conflict" description="In Ref. 1; BAC25168." evidence="3" ref="1">
    <original>K</original>
    <variation>E</variation>
    <location>
        <position position="149"/>
    </location>
</feature>
<dbReference type="EMBL" id="AK016626">
    <property type="protein sequence ID" value="BAB30345.1"/>
    <property type="molecule type" value="mRNA"/>
</dbReference>
<dbReference type="EMBL" id="AK007202">
    <property type="protein sequence ID" value="BAC25168.1"/>
    <property type="status" value="ALT_FRAME"/>
    <property type="molecule type" value="mRNA"/>
</dbReference>
<dbReference type="EMBL" id="AK137605">
    <property type="protein sequence ID" value="BAE23427.1"/>
    <property type="molecule type" value="mRNA"/>
</dbReference>
<dbReference type="EMBL" id="BC030908">
    <property type="protein sequence ID" value="AAH30908.1"/>
    <property type="molecule type" value="mRNA"/>
</dbReference>
<dbReference type="EMBL" id="BC051150">
    <property type="protein sequence ID" value="AAH51150.1"/>
    <property type="molecule type" value="mRNA"/>
</dbReference>
<dbReference type="CCDS" id="CCDS22286.1">
    <molecule id="Q9D4C6-1"/>
</dbReference>
<dbReference type="RefSeq" id="NP_080554.1">
    <molecule id="Q9D4C6-1"/>
    <property type="nucleotide sequence ID" value="NM_026278.3"/>
</dbReference>
<dbReference type="SMR" id="Q9D4C6"/>
<dbReference type="FunCoup" id="Q9D4C6">
    <property type="interactions" value="425"/>
</dbReference>
<dbReference type="STRING" id="10090.ENSMUSP00000106010"/>
<dbReference type="PhosphoSitePlus" id="Q9D4C6"/>
<dbReference type="PaxDb" id="10090-ENSMUSP00000106010"/>
<dbReference type="ProteomicsDB" id="252492">
    <molecule id="Q9D4C6-1"/>
</dbReference>
<dbReference type="ProteomicsDB" id="252493">
    <molecule id="Q9D4C6-2"/>
</dbReference>
<dbReference type="Antibodypedia" id="28937">
    <property type="antibodies" value="61 antibodies from 17 providers"/>
</dbReference>
<dbReference type="Ensembl" id="ENSMUST00000110380.8">
    <molecule id="Q9D4C6-1"/>
    <property type="protein sequence ID" value="ENSMUSP00000106009.2"/>
    <property type="gene ID" value="ENSMUSG00000031637.14"/>
</dbReference>
<dbReference type="Ensembl" id="ENSMUST00000110381.9">
    <molecule id="Q9D4C6-1"/>
    <property type="protein sequence ID" value="ENSMUSP00000106010.3"/>
    <property type="gene ID" value="ENSMUSG00000031637.14"/>
</dbReference>
<dbReference type="GeneID" id="67620"/>
<dbReference type="KEGG" id="mmu:67620"/>
<dbReference type="UCSC" id="uc009lpt.1">
    <molecule id="Q9D4C6-1"/>
    <property type="organism name" value="mouse"/>
</dbReference>
<dbReference type="AGR" id="MGI:1914870"/>
<dbReference type="CTD" id="55805"/>
<dbReference type="MGI" id="MGI:1914870">
    <property type="gene designation" value="Lrp2bp"/>
</dbReference>
<dbReference type="VEuPathDB" id="HostDB:ENSMUSG00000031637"/>
<dbReference type="eggNOG" id="KOG1550">
    <property type="taxonomic scope" value="Eukaryota"/>
</dbReference>
<dbReference type="GeneTree" id="ENSGT00390000013490"/>
<dbReference type="HOGENOM" id="CLU_068264_0_0_1"/>
<dbReference type="InParanoid" id="Q9D4C6"/>
<dbReference type="OrthoDB" id="12314at9989"/>
<dbReference type="PhylomeDB" id="Q9D4C6"/>
<dbReference type="TreeFam" id="TF315257"/>
<dbReference type="BioGRID-ORCS" id="67620">
    <property type="hits" value="3 hits in 77 CRISPR screens"/>
</dbReference>
<dbReference type="ChiTaRS" id="Lrp2bp">
    <property type="organism name" value="mouse"/>
</dbReference>
<dbReference type="PRO" id="PR:Q9D4C6"/>
<dbReference type="Proteomes" id="UP000000589">
    <property type="component" value="Chromosome 8"/>
</dbReference>
<dbReference type="RNAct" id="Q9D4C6">
    <property type="molecule type" value="protein"/>
</dbReference>
<dbReference type="Bgee" id="ENSMUSG00000031637">
    <property type="expression patterns" value="Expressed in spermatid and 149 other cell types or tissues"/>
</dbReference>
<dbReference type="ExpressionAtlas" id="Q9D4C6">
    <property type="expression patterns" value="baseline and differential"/>
</dbReference>
<dbReference type="GO" id="GO:0005737">
    <property type="term" value="C:cytoplasm"/>
    <property type="evidence" value="ECO:0000266"/>
    <property type="project" value="MGI"/>
</dbReference>
<dbReference type="FunFam" id="1.25.40.10:FF:001421">
    <property type="entry name" value="LRP2-binding protein"/>
    <property type="match status" value="1"/>
</dbReference>
<dbReference type="Gene3D" id="1.25.40.10">
    <property type="entry name" value="Tetratricopeptide repeat domain"/>
    <property type="match status" value="1"/>
</dbReference>
<dbReference type="InterPro" id="IPR052323">
    <property type="entry name" value="LRP2-binding"/>
</dbReference>
<dbReference type="InterPro" id="IPR006597">
    <property type="entry name" value="Sel1-like"/>
</dbReference>
<dbReference type="InterPro" id="IPR011990">
    <property type="entry name" value="TPR-like_helical_dom_sf"/>
</dbReference>
<dbReference type="InterPro" id="IPR019734">
    <property type="entry name" value="TPR_rpt"/>
</dbReference>
<dbReference type="PANTHER" id="PTHR44554">
    <property type="entry name" value="LRP2-BINDING PROTEIN"/>
    <property type="match status" value="1"/>
</dbReference>
<dbReference type="PANTHER" id="PTHR44554:SF1">
    <property type="entry name" value="LRP2-BINDING PROTEIN"/>
    <property type="match status" value="1"/>
</dbReference>
<dbReference type="Pfam" id="PF08238">
    <property type="entry name" value="Sel1"/>
    <property type="match status" value="5"/>
</dbReference>
<dbReference type="Pfam" id="PF13181">
    <property type="entry name" value="TPR_8"/>
    <property type="match status" value="1"/>
</dbReference>
<dbReference type="SMART" id="SM00671">
    <property type="entry name" value="SEL1"/>
    <property type="match status" value="5"/>
</dbReference>
<dbReference type="SUPFAM" id="SSF81901">
    <property type="entry name" value="HCP-like"/>
    <property type="match status" value="1"/>
</dbReference>
<dbReference type="PROSITE" id="PS50005">
    <property type="entry name" value="TPR"/>
    <property type="match status" value="1"/>
</dbReference>
<dbReference type="PROSITE" id="PS50293">
    <property type="entry name" value="TPR_REGION"/>
    <property type="match status" value="1"/>
</dbReference>
<organism>
    <name type="scientific">Mus musculus</name>
    <name type="common">Mouse</name>
    <dbReference type="NCBI Taxonomy" id="10090"/>
    <lineage>
        <taxon>Eukaryota</taxon>
        <taxon>Metazoa</taxon>
        <taxon>Chordata</taxon>
        <taxon>Craniata</taxon>
        <taxon>Vertebrata</taxon>
        <taxon>Euteleostomi</taxon>
        <taxon>Mammalia</taxon>
        <taxon>Eutheria</taxon>
        <taxon>Euarchontoglires</taxon>
        <taxon>Glires</taxon>
        <taxon>Rodentia</taxon>
        <taxon>Myomorpha</taxon>
        <taxon>Muroidea</taxon>
        <taxon>Muridae</taxon>
        <taxon>Murinae</taxon>
        <taxon>Mus</taxon>
        <taxon>Mus</taxon>
    </lineage>
</organism>
<comment type="function">
    <text evidence="1">May act as an adapter that regulates LRP2 function.</text>
</comment>
<comment type="subunit">
    <text evidence="1">Interacts with LRP2.</text>
</comment>
<comment type="subcellular location">
    <subcellularLocation>
        <location evidence="1">Cytoplasm</location>
    </subcellularLocation>
    <text evidence="1">Detected in a vesicular staining pattern close to the plasma membrane and throughout the cytoplasm.</text>
</comment>
<comment type="alternative products">
    <event type="alternative splicing"/>
    <isoform>
        <id>Q9D4C6-1</id>
        <name>1</name>
        <sequence type="displayed"/>
    </isoform>
    <isoform>
        <id>Q9D4C6-2</id>
        <name>2</name>
        <sequence type="described" ref="VSP_030665"/>
    </isoform>
</comment>
<comment type="sequence caution" evidence="3">
    <conflict type="frameshift">
        <sequence resource="EMBL-CDS" id="BAC25168"/>
    </conflict>
</comment>
<keyword id="KW-0025">Alternative splicing</keyword>
<keyword id="KW-0963">Cytoplasm</keyword>
<keyword id="KW-1185">Reference proteome</keyword>
<keyword id="KW-0677">Repeat</keyword>
<keyword id="KW-0802">TPR repeat</keyword>
<proteinExistence type="evidence at transcript level"/>
<evidence type="ECO:0000250" key="1"/>
<evidence type="ECO:0000303" key="2">
    <source>
    </source>
</evidence>
<evidence type="ECO:0000305" key="3"/>
<accession>Q9D4C6</accession>
<accession>Q3UV46</accession>
<accession>Q8CF18</accession>
<accession>Q8K0N7</accession>
<gene>
    <name type="primary">Lrp2bp</name>
</gene>
<protein>
    <recommendedName>
        <fullName>LRP2-binding protein</fullName>
    </recommendedName>
</protein>